<dbReference type="EC" id="4.6.1.-" evidence="4"/>
<dbReference type="EMBL" id="FJ171462">
    <property type="protein sequence ID" value="ACN48958.1"/>
    <property type="molecule type" value="mRNA"/>
</dbReference>
<dbReference type="SMR" id="C0JB27"/>
<dbReference type="GO" id="GO:0005576">
    <property type="term" value="C:extracellular region"/>
    <property type="evidence" value="ECO:0007669"/>
    <property type="project" value="UniProtKB-SubCell"/>
</dbReference>
<dbReference type="GO" id="GO:0016829">
    <property type="term" value="F:lyase activity"/>
    <property type="evidence" value="ECO:0007669"/>
    <property type="project" value="UniProtKB-KW"/>
</dbReference>
<dbReference type="GO" id="GO:0046872">
    <property type="term" value="F:metal ion binding"/>
    <property type="evidence" value="ECO:0007669"/>
    <property type="project" value="UniProtKB-KW"/>
</dbReference>
<dbReference type="GO" id="GO:0008081">
    <property type="term" value="F:phosphoric diester hydrolase activity"/>
    <property type="evidence" value="ECO:0007669"/>
    <property type="project" value="InterPro"/>
</dbReference>
<dbReference type="GO" id="GO:0090729">
    <property type="term" value="F:toxin activity"/>
    <property type="evidence" value="ECO:0007669"/>
    <property type="project" value="UniProtKB-KW"/>
</dbReference>
<dbReference type="GO" id="GO:0031640">
    <property type="term" value="P:killing of cells of another organism"/>
    <property type="evidence" value="ECO:0007669"/>
    <property type="project" value="UniProtKB-KW"/>
</dbReference>
<dbReference type="GO" id="GO:0016042">
    <property type="term" value="P:lipid catabolic process"/>
    <property type="evidence" value="ECO:0007669"/>
    <property type="project" value="UniProtKB-KW"/>
</dbReference>
<dbReference type="CDD" id="cd08576">
    <property type="entry name" value="GDPD_like_SMaseD_PLD"/>
    <property type="match status" value="1"/>
</dbReference>
<dbReference type="Gene3D" id="3.20.20.190">
    <property type="entry name" value="Phosphatidylinositol (PI) phosphodiesterase"/>
    <property type="match status" value="1"/>
</dbReference>
<dbReference type="InterPro" id="IPR017946">
    <property type="entry name" value="PLC-like_Pdiesterase_TIM-brl"/>
</dbReference>
<dbReference type="SUPFAM" id="SSF51695">
    <property type="entry name" value="PLC-like phosphodiesterases"/>
    <property type="match status" value="1"/>
</dbReference>
<evidence type="ECO:0000250" key="1">
    <source>
        <dbReference type="UniProtKB" id="A0A0D4WTV1"/>
    </source>
</evidence>
<evidence type="ECO:0000250" key="2">
    <source>
        <dbReference type="UniProtKB" id="A0A0D4WV12"/>
    </source>
</evidence>
<evidence type="ECO:0000250" key="3">
    <source>
        <dbReference type="UniProtKB" id="P0CE80"/>
    </source>
</evidence>
<evidence type="ECO:0000250" key="4">
    <source>
        <dbReference type="UniProtKB" id="Q4ZFU2"/>
    </source>
</evidence>
<evidence type="ECO:0000250" key="5">
    <source>
        <dbReference type="UniProtKB" id="Q8I914"/>
    </source>
</evidence>
<evidence type="ECO:0000303" key="6">
    <source>
    </source>
</evidence>
<evidence type="ECO:0000305" key="7"/>
<evidence type="ECO:0000305" key="8">
    <source>
    </source>
</evidence>
<protein>
    <recommendedName>
        <fullName evidence="6">Dermonecrotic toxin LlSicTox-alphaIV2iii</fullName>
        <ecNumber evidence="4">4.6.1.-</ecNumber>
    </recommendedName>
    <alternativeName>
        <fullName>Phospholipase D</fullName>
        <shortName>PLD</shortName>
    </alternativeName>
    <alternativeName>
        <fullName>Sphingomyelin phosphodiesterase D</fullName>
        <shortName>SMD</shortName>
        <shortName>SMase D</shortName>
        <shortName>Sphingomyelinase D</shortName>
    </alternativeName>
</protein>
<organism>
    <name type="scientific">Loxosceles laeta</name>
    <name type="common">South American recluse spider</name>
    <name type="synonym">Scytodes laeta</name>
    <dbReference type="NCBI Taxonomy" id="58217"/>
    <lineage>
        <taxon>Eukaryota</taxon>
        <taxon>Metazoa</taxon>
        <taxon>Ecdysozoa</taxon>
        <taxon>Arthropoda</taxon>
        <taxon>Chelicerata</taxon>
        <taxon>Arachnida</taxon>
        <taxon>Araneae</taxon>
        <taxon>Araneomorphae</taxon>
        <taxon>Haplogynae</taxon>
        <taxon>Scytodoidea</taxon>
        <taxon>Sicariidae</taxon>
        <taxon>Loxosceles</taxon>
    </lineage>
</organism>
<reference key="1">
    <citation type="journal article" date="2009" name="Mol. Biol. Evol.">
        <title>Molecular evolution, functional variation, and proposed nomenclature of the gene family that includes sphingomyelinase D in sicariid spider venoms.</title>
        <authorList>
            <person name="Binford G.J."/>
            <person name="Bodner M.R."/>
            <person name="Cordes M.H."/>
            <person name="Baldwin K.L."/>
            <person name="Rynerson M.R."/>
            <person name="Burns S.N."/>
            <person name="Zobel-Thropp P.A."/>
        </authorList>
    </citation>
    <scope>NUCLEOTIDE SEQUENCE [MRNA]</scope>
    <scope>NOMENCLATURE</scope>
    <source>
        <tissue>Venom gland</tissue>
    </source>
</reference>
<feature type="chain" id="PRO_0000392841" description="Dermonecrotic toxin LlSicTox-alphaIV2iii">
    <location>
        <begin position="1" status="less than"/>
        <end position="276"/>
    </location>
</feature>
<feature type="active site" evidence="5">
    <location>
        <position position="5"/>
    </location>
</feature>
<feature type="active site" description="Nucleophile" evidence="5">
    <location>
        <position position="41"/>
    </location>
</feature>
<feature type="binding site" evidence="5">
    <location>
        <position position="25"/>
    </location>
    <ligand>
        <name>Mg(2+)</name>
        <dbReference type="ChEBI" id="CHEBI:18420"/>
    </ligand>
</feature>
<feature type="binding site" evidence="5">
    <location>
        <position position="27"/>
    </location>
    <ligand>
        <name>Mg(2+)</name>
        <dbReference type="ChEBI" id="CHEBI:18420"/>
    </ligand>
</feature>
<feature type="binding site" evidence="5">
    <location>
        <position position="85"/>
    </location>
    <ligand>
        <name>Mg(2+)</name>
        <dbReference type="ChEBI" id="CHEBI:18420"/>
    </ligand>
</feature>
<feature type="disulfide bond" evidence="3">
    <location>
        <begin position="45"/>
        <end position="51"/>
    </location>
</feature>
<feature type="disulfide bond" evidence="3">
    <location>
        <begin position="47"/>
        <end position="193"/>
    </location>
</feature>
<feature type="non-terminal residue">
    <location>
        <position position="1"/>
    </location>
</feature>
<proteinExistence type="evidence at transcript level"/>
<name>A423_LOXLA</name>
<comment type="function">
    <text evidence="1 3">Dermonecrotic toxins cleave the phosphodiester linkage between the phosphate and headgroup of certain phospholipids (sphingolipid and lysolipid substrates), forming an alcohol (often choline) and a cyclic phosphate (By similarity). This toxin acts on sphingomyelin (SM) (By similarity). It may also act on ceramide phosphoethanolamine (CPE), lysophosphatidylcholine (LPC) and lysophosphatidylethanolamine (LPE), but not on lysophosphatidylserine (LPS), and lysophosphatidylglycerol (LPG) (By similarity). It acts by transphosphatidylation, releasing exclusively cyclic phosphate products as second products (By similarity). Induces dermonecrosis, hemolysis, increased vascular permeability, edema, inflammatory response, and platelet aggregation (By similarity).</text>
</comment>
<comment type="catalytic activity">
    <reaction evidence="1">
        <text>an N-(acyl)-sphingosylphosphocholine = an N-(acyl)-sphingosyl-1,3-cyclic phosphate + choline</text>
        <dbReference type="Rhea" id="RHEA:60652"/>
        <dbReference type="ChEBI" id="CHEBI:15354"/>
        <dbReference type="ChEBI" id="CHEBI:64583"/>
        <dbReference type="ChEBI" id="CHEBI:143892"/>
    </reaction>
</comment>
<comment type="catalytic activity">
    <reaction evidence="1">
        <text>an N-(acyl)-sphingosylphosphoethanolamine = an N-(acyl)-sphingosyl-1,3-cyclic phosphate + ethanolamine</text>
        <dbReference type="Rhea" id="RHEA:60648"/>
        <dbReference type="ChEBI" id="CHEBI:57603"/>
        <dbReference type="ChEBI" id="CHEBI:143891"/>
        <dbReference type="ChEBI" id="CHEBI:143892"/>
    </reaction>
</comment>
<comment type="catalytic activity">
    <reaction evidence="1">
        <text>a 1-acyl-sn-glycero-3-phosphocholine = a 1-acyl-sn-glycero-2,3-cyclic phosphate + choline</text>
        <dbReference type="Rhea" id="RHEA:60700"/>
        <dbReference type="ChEBI" id="CHEBI:15354"/>
        <dbReference type="ChEBI" id="CHEBI:58168"/>
        <dbReference type="ChEBI" id="CHEBI:143947"/>
    </reaction>
</comment>
<comment type="catalytic activity">
    <reaction evidence="1">
        <text>a 1-acyl-sn-glycero-3-phosphoethanolamine = a 1-acyl-sn-glycero-2,3-cyclic phosphate + ethanolamine</text>
        <dbReference type="Rhea" id="RHEA:60704"/>
        <dbReference type="ChEBI" id="CHEBI:57603"/>
        <dbReference type="ChEBI" id="CHEBI:64381"/>
        <dbReference type="ChEBI" id="CHEBI:143947"/>
    </reaction>
</comment>
<comment type="cofactor">
    <cofactor evidence="5">
        <name>Mg(2+)</name>
        <dbReference type="ChEBI" id="CHEBI:18420"/>
    </cofactor>
    <text evidence="5">Binds 1 Mg(2+) ion per subunit.</text>
</comment>
<comment type="subcellular location">
    <subcellularLocation>
        <location evidence="8">Secreted</location>
    </subcellularLocation>
</comment>
<comment type="tissue specificity">
    <text evidence="8">Expressed by the venom gland.</text>
</comment>
<comment type="similarity">
    <text evidence="7">Belongs to the arthropod phospholipase D family. Class II subfamily.</text>
</comment>
<comment type="caution">
    <text evidence="1 2 4">The most common activity assay for dermonecrotic toxins detects enzymatic activity by monitoring choline release from substrate. Liberation of choline from sphingomyelin (SM) or lysophosphatidylcholine (LPC) is commonly assumed to result from substrate hydrolysis, giving either ceramide-1-phosphate (C1P) or lysophosphatidic acid (LPA), respectively, as a second product. However, two studies from Lajoie and colleagues (2013 and 2015) report the observation of exclusive formation of cyclic phosphate products as second products, resulting from intramolecular transphosphatidylation. Cyclic phosphates have vastly different biological properties from their monoester counterparts, and they may be relevant to the pathology of brown spider envenomation.</text>
</comment>
<accession>C0JB27</accession>
<sequence length="276" mass="31579">WIMGHMVNKIEQINEFLDLGANSIEVDIAFDELGYPEYTYHGVPCDCKRYCTKSEKIDDFIEALSAATTPGNPKFRKELTLVVFDLKTGGFDASRMYKSGKAFAELIQFSYWKGSDDAGRAYIVLSLPKLDHYEFIKAFREHFDTSTFKNLLEERVGYDFSGNEDMGLTRVVLDKAGVNDREHVWQGDGITNCILRSLDRVKAAVAIRDSATGYINKVYFWTIQAYSSVRDALNAEVDGIMTNEPDVIANILKEDAFKDRFRLATYRDNPWETFKR</sequence>
<keyword id="KW-0204">Cytolysis</keyword>
<keyword id="KW-1061">Dermonecrotic toxin</keyword>
<keyword id="KW-1015">Disulfide bond</keyword>
<keyword id="KW-0354">Hemolysis</keyword>
<keyword id="KW-0442">Lipid degradation</keyword>
<keyword id="KW-0443">Lipid metabolism</keyword>
<keyword id="KW-0456">Lyase</keyword>
<keyword id="KW-0460">Magnesium</keyword>
<keyword id="KW-0479">Metal-binding</keyword>
<keyword id="KW-0964">Secreted</keyword>
<keyword id="KW-0800">Toxin</keyword>